<keyword id="KW-0027">Amidation</keyword>
<keyword id="KW-0165">Cleavage on pair of basic residues</keyword>
<keyword id="KW-0372">Hormone</keyword>
<keyword id="KW-0873">Pyrrolidone carboxylic acid</keyword>
<keyword id="KW-1185">Reference proteome</keyword>
<keyword id="KW-0964">Secreted</keyword>
<keyword id="KW-0732">Signal</keyword>
<dbReference type="EMBL" id="AF224279">
    <property type="protein sequence ID" value="AAF62898.1"/>
    <property type="molecule type" value="mRNA"/>
</dbReference>
<dbReference type="Proteomes" id="UP000694389">
    <property type="component" value="Unplaced"/>
</dbReference>
<dbReference type="GO" id="GO:0005615">
    <property type="term" value="C:extracellular space"/>
    <property type="evidence" value="ECO:0000250"/>
    <property type="project" value="UniProtKB"/>
</dbReference>
<dbReference type="GO" id="GO:0005179">
    <property type="term" value="F:hormone activity"/>
    <property type="evidence" value="ECO:0007669"/>
    <property type="project" value="UniProtKB-KW"/>
</dbReference>
<dbReference type="InterPro" id="IPR002012">
    <property type="entry name" value="GnRH"/>
</dbReference>
<dbReference type="PROSITE" id="PS00473">
    <property type="entry name" value="GNRH"/>
    <property type="match status" value="1"/>
</dbReference>
<feature type="signal peptide" evidence="2">
    <location>
        <begin position="1"/>
        <end position="26"/>
    </location>
</feature>
<feature type="chain" id="PRO_0000012429" description="Progonadoliberin-1">
    <location>
        <begin position="27"/>
        <end position="99"/>
    </location>
</feature>
<feature type="peptide" id="PRO_0000012430" description="Gonadoliberin-1">
    <location>
        <begin position="27"/>
        <end position="36"/>
    </location>
</feature>
<feature type="peptide" id="PRO_0000012431" description="GnRH-associated peptide 1" evidence="2">
    <location>
        <begin position="40"/>
        <end position="99"/>
    </location>
</feature>
<feature type="modified residue" description="Pyrrolidone carboxylic acid" evidence="1">
    <location>
        <position position="27"/>
    </location>
</feature>
<feature type="modified residue" description="Glycine amide" evidence="1">
    <location>
        <position position="36"/>
    </location>
</feature>
<organism>
    <name type="scientific">Dicentrarchus labrax</name>
    <name type="common">European seabass</name>
    <name type="synonym">Morone labrax</name>
    <dbReference type="NCBI Taxonomy" id="13489"/>
    <lineage>
        <taxon>Eukaryota</taxon>
        <taxon>Metazoa</taxon>
        <taxon>Chordata</taxon>
        <taxon>Craniata</taxon>
        <taxon>Vertebrata</taxon>
        <taxon>Euteleostomi</taxon>
        <taxon>Actinopterygii</taxon>
        <taxon>Neopterygii</taxon>
        <taxon>Teleostei</taxon>
        <taxon>Neoteleostei</taxon>
        <taxon>Acanthomorphata</taxon>
        <taxon>Eupercaria</taxon>
        <taxon>Moronidae</taxon>
        <taxon>Dicentrarchus</taxon>
    </lineage>
</organism>
<name>GON1_DICLA</name>
<protein>
    <recommendedName>
        <fullName>Progonadoliberin-1</fullName>
    </recommendedName>
    <alternativeName>
        <fullName>Progonadoliberin I</fullName>
    </alternativeName>
    <component>
        <recommendedName>
            <fullName>Gonadoliberin-1</fullName>
        </recommendedName>
        <alternativeName>
            <fullName>Gonadoliberin I</fullName>
        </alternativeName>
        <alternativeName>
            <fullName>Gonadotropin-releasing hormone I</fullName>
            <shortName>GnRH-I</shortName>
        </alternativeName>
        <alternativeName>
            <fullName>Luliberin I</fullName>
        </alternativeName>
        <alternativeName>
            <fullName>Luteinizing hormone-releasing hormone I</fullName>
            <shortName>LH-RH I</shortName>
        </alternativeName>
    </component>
    <component>
        <recommendedName>
            <fullName>GnRH-associated peptide 1</fullName>
        </recommendedName>
        <alternativeName>
            <fullName>GnRH-associated peptide I</fullName>
        </alternativeName>
    </component>
</protein>
<sequence>MAAQTFALRLLLVGTLLGTLLGQGCCQHWSYGLSPGGKRELDGLSETLGNQIVGSFPHVATPCRVLGCAEESPFPKIYRMKGFLDAVTDRENGNRTYKK</sequence>
<accession>Q9IA10</accession>
<gene>
    <name type="primary">gnrh1</name>
</gene>
<comment type="function">
    <text>Stimulates the secretion of gonadotropins.</text>
</comment>
<comment type="subcellular location">
    <subcellularLocation>
        <location>Secreted</location>
    </subcellularLocation>
</comment>
<comment type="similarity">
    <text evidence="3">Belongs to the GnRH family.</text>
</comment>
<proteinExistence type="inferred from homology"/>
<reference key="1">
    <citation type="journal article" date="2001" name="J. Comp. Neurol.">
        <title>Differential expression of three different prepro-GnRH (gonadotrophin-releasing hormone) messengers in the brain of the European sea bass (Dicentrarchus labrax).</title>
        <authorList>
            <person name="Gonzalez-Martinez D."/>
            <person name="Madigou T."/>
            <person name="Zmora N."/>
            <person name="Anglade I."/>
            <person name="Zanuy S."/>
            <person name="Zohar Y."/>
            <person name="Elizur A."/>
            <person name="Munoz-Cueto J.A."/>
            <person name="Kah O."/>
        </authorList>
    </citation>
    <scope>NUCLEOTIDE SEQUENCE [MRNA]</scope>
    <source>
        <tissue>Brain</tissue>
    </source>
</reference>
<evidence type="ECO:0000250" key="1"/>
<evidence type="ECO:0000255" key="2"/>
<evidence type="ECO:0000305" key="3"/>